<sequence>MSSLEKRVFLDMALDEKPIGRIEIKLFTSEAPKTCENFRALCTGEVGMAPNNKARLHYKGNEIHRVVKKFMIQGGDITDGDGRGGFSIYGRYFDDEKFVLKHSKPYLLSMANKGPNSNSSQFFITTAPAPHCNGKHVVFGEVIKGREVVDVLDNLEVDGKSKPIAKVRIFNSGELVKKKKPSKTKEELAALEERKRQEAKKDIPDIPKSWLYRDNEERESDFSSKTESSRVRSRSKSPSNNYETRRGHMANSRGDRNRRTQRADRKDDFGIAVRGRGGVQFRRVRYVTPEHWRRNAPSKWQQGSYTHPVDLQP</sequence>
<keyword id="KW-0413">Isomerase</keyword>
<keyword id="KW-1185">Reference proteome</keyword>
<keyword id="KW-0697">Rotamase</keyword>
<organism>
    <name type="scientific">Caenorhabditis briggsae</name>
    <dbReference type="NCBI Taxonomy" id="6238"/>
    <lineage>
        <taxon>Eukaryota</taxon>
        <taxon>Metazoa</taxon>
        <taxon>Ecdysozoa</taxon>
        <taxon>Nematoda</taxon>
        <taxon>Chromadorea</taxon>
        <taxon>Rhabditida</taxon>
        <taxon>Rhabditina</taxon>
        <taxon>Rhabditomorpha</taxon>
        <taxon>Rhabditoidea</taxon>
        <taxon>Rhabditidae</taxon>
        <taxon>Peloderinae</taxon>
        <taxon>Caenorhabditis</taxon>
    </lineage>
</organism>
<protein>
    <recommendedName>
        <fullName>Peptidyl-prolyl cis-trans isomerase 9</fullName>
        <shortName>PPIase 9</shortName>
        <ecNumber>5.2.1.8</ecNumber>
    </recommendedName>
    <alternativeName>
        <fullName>Cyclophilin-9</fullName>
    </alternativeName>
    <alternativeName>
        <fullName>Rotamase 9</fullName>
    </alternativeName>
</protein>
<accession>A8X8D0</accession>
<accession>Q9XTP5</accession>
<feature type="chain" id="PRO_0000332946" description="Peptidyl-prolyl cis-trans isomerase 9">
    <location>
        <begin position="1"/>
        <end position="313"/>
    </location>
</feature>
<feature type="domain" description="PPIase cyclophilin-type" evidence="3">
    <location>
        <begin position="9"/>
        <end position="174"/>
    </location>
</feature>
<feature type="region of interest" description="Disordered" evidence="4">
    <location>
        <begin position="216"/>
        <end position="274"/>
    </location>
</feature>
<feature type="region of interest" description="Disordered" evidence="4">
    <location>
        <begin position="288"/>
        <end position="313"/>
    </location>
</feature>
<feature type="compositionally biased region" description="Basic and acidic residues" evidence="4">
    <location>
        <begin position="216"/>
        <end position="230"/>
    </location>
</feature>
<feature type="compositionally biased region" description="Basic and acidic residues" evidence="4">
    <location>
        <begin position="253"/>
        <end position="269"/>
    </location>
</feature>
<comment type="function">
    <text evidence="1">PPIases accelerate the folding of proteins. It catalyzes the cis-trans isomerization of proline imid ic peptide bonds in oligopeptides. Thought to function as a catalyst in the folding and modification of cuticle collagens (By similarity).</text>
</comment>
<comment type="catalytic activity">
    <reaction evidence="1">
        <text>[protein]-peptidylproline (omega=180) = [protein]-peptidylproline (omega=0)</text>
        <dbReference type="Rhea" id="RHEA:16237"/>
        <dbReference type="Rhea" id="RHEA-COMP:10747"/>
        <dbReference type="Rhea" id="RHEA-COMP:10748"/>
        <dbReference type="ChEBI" id="CHEBI:83833"/>
        <dbReference type="ChEBI" id="CHEBI:83834"/>
        <dbReference type="EC" id="5.2.1.8"/>
    </reaction>
</comment>
<comment type="similarity">
    <text evidence="2">Belongs to the cyclophilin-type PPIase family.</text>
</comment>
<comment type="sequence caution" evidence="5">
    <conflict type="erroneous gene model prediction">
        <sequence resource="EMBL-CDS" id="CAB40202"/>
    </conflict>
</comment>
<dbReference type="EC" id="5.2.1.8"/>
<dbReference type="EMBL" id="HE601123">
    <property type="protein sequence ID" value="CAP28891.2"/>
    <property type="molecule type" value="Genomic_DNA"/>
</dbReference>
<dbReference type="EMBL" id="AJ005807">
    <property type="protein sequence ID" value="CAB40202.1"/>
    <property type="status" value="ALT_SEQ"/>
    <property type="molecule type" value="Genomic_DNA"/>
</dbReference>
<dbReference type="EMBL" id="AJ005809">
    <property type="protein sequence ID" value="CAB40206.1"/>
    <property type="molecule type" value="mRNA"/>
</dbReference>
<dbReference type="SMR" id="A8X8D0"/>
<dbReference type="FunCoup" id="A8X8D0">
    <property type="interactions" value="13"/>
</dbReference>
<dbReference type="STRING" id="6238.A8X8D0"/>
<dbReference type="EnsemblMetazoa" id="CBG09202.1">
    <property type="protein sequence ID" value="CBG09202.1"/>
    <property type="gene ID" value="WBGene00030832"/>
</dbReference>
<dbReference type="WormBase" id="CBG09202">
    <property type="protein sequence ID" value="CBP25106"/>
    <property type="gene ID" value="WBGene00030832"/>
    <property type="gene designation" value="Cbr-cyn-9"/>
</dbReference>
<dbReference type="eggNOG" id="KOG0546">
    <property type="taxonomic scope" value="Eukaryota"/>
</dbReference>
<dbReference type="HOGENOM" id="CLU_012062_33_4_1"/>
<dbReference type="InParanoid" id="A8X8D0"/>
<dbReference type="OMA" id="HCNGKHV"/>
<dbReference type="Proteomes" id="UP000008549">
    <property type="component" value="Unassembled WGS sequence"/>
</dbReference>
<dbReference type="GO" id="GO:0005737">
    <property type="term" value="C:cytoplasm"/>
    <property type="evidence" value="ECO:0000318"/>
    <property type="project" value="GO_Central"/>
</dbReference>
<dbReference type="GO" id="GO:0005829">
    <property type="term" value="C:cytosol"/>
    <property type="evidence" value="ECO:0000318"/>
    <property type="project" value="GO_Central"/>
</dbReference>
<dbReference type="GO" id="GO:0016018">
    <property type="term" value="F:cyclosporin A binding"/>
    <property type="evidence" value="ECO:0000318"/>
    <property type="project" value="GO_Central"/>
</dbReference>
<dbReference type="GO" id="GO:0003755">
    <property type="term" value="F:peptidyl-prolyl cis-trans isomerase activity"/>
    <property type="evidence" value="ECO:0000318"/>
    <property type="project" value="GO_Central"/>
</dbReference>
<dbReference type="GO" id="GO:0006457">
    <property type="term" value="P:protein folding"/>
    <property type="evidence" value="ECO:0000318"/>
    <property type="project" value="GO_Central"/>
</dbReference>
<dbReference type="FunFam" id="2.40.100.10:FF:000022">
    <property type="entry name" value="Peptidyl-prolyl cis-trans isomerase CYP95"/>
    <property type="match status" value="1"/>
</dbReference>
<dbReference type="Gene3D" id="2.40.100.10">
    <property type="entry name" value="Cyclophilin-like"/>
    <property type="match status" value="1"/>
</dbReference>
<dbReference type="InterPro" id="IPR029000">
    <property type="entry name" value="Cyclophilin-like_dom_sf"/>
</dbReference>
<dbReference type="InterPro" id="IPR002130">
    <property type="entry name" value="Cyclophilin-type_PPIase_dom"/>
</dbReference>
<dbReference type="PANTHER" id="PTHR11071">
    <property type="entry name" value="PEPTIDYL-PROLYL CIS-TRANS ISOMERASE"/>
    <property type="match status" value="1"/>
</dbReference>
<dbReference type="PANTHER" id="PTHR11071:SF561">
    <property type="entry name" value="PEPTIDYL-PROLYL CIS-TRANS ISOMERASE D-RELATED"/>
    <property type="match status" value="1"/>
</dbReference>
<dbReference type="Pfam" id="PF00160">
    <property type="entry name" value="Pro_isomerase"/>
    <property type="match status" value="1"/>
</dbReference>
<dbReference type="PRINTS" id="PR00153">
    <property type="entry name" value="CSAPPISMRASE"/>
</dbReference>
<dbReference type="SUPFAM" id="SSF50891">
    <property type="entry name" value="Cyclophilin-like"/>
    <property type="match status" value="1"/>
</dbReference>
<dbReference type="PROSITE" id="PS50072">
    <property type="entry name" value="CSA_PPIASE_2"/>
    <property type="match status" value="1"/>
</dbReference>
<name>CYP9_CAEBR</name>
<gene>
    <name evidence="1" type="primary">cyn-9</name>
    <name evidence="7" type="synonym">cyp-9</name>
    <name type="ORF">CBG09202</name>
</gene>
<evidence type="ECO:0000250" key="1">
    <source>
        <dbReference type="UniProtKB" id="Q09637"/>
    </source>
</evidence>
<evidence type="ECO:0000255" key="2"/>
<evidence type="ECO:0000255" key="3">
    <source>
        <dbReference type="PROSITE-ProRule" id="PRU00156"/>
    </source>
</evidence>
<evidence type="ECO:0000256" key="4">
    <source>
        <dbReference type="SAM" id="MobiDB-lite"/>
    </source>
</evidence>
<evidence type="ECO:0000305" key="5"/>
<evidence type="ECO:0000312" key="6">
    <source>
        <dbReference type="EMBL" id="CAB40202.1"/>
    </source>
</evidence>
<evidence type="ECO:0000312" key="7">
    <source>
        <dbReference type="EMBL" id="CAB40206.1"/>
    </source>
</evidence>
<reference key="1">
    <citation type="journal article" date="2003" name="PLoS Biol.">
        <title>The genome sequence of Caenorhabditis briggsae: a platform for comparative genomics.</title>
        <authorList>
            <person name="Stein L.D."/>
            <person name="Bao Z."/>
            <person name="Blasiar D."/>
            <person name="Blumenthal T."/>
            <person name="Brent M.R."/>
            <person name="Chen N."/>
            <person name="Chinwalla A."/>
            <person name="Clarke L."/>
            <person name="Clee C."/>
            <person name="Coghlan A."/>
            <person name="Coulson A."/>
            <person name="D'Eustachio P."/>
            <person name="Fitch D.H.A."/>
            <person name="Fulton L.A."/>
            <person name="Fulton R.E."/>
            <person name="Griffiths-Jones S."/>
            <person name="Harris T.W."/>
            <person name="Hillier L.W."/>
            <person name="Kamath R."/>
            <person name="Kuwabara P.E."/>
            <person name="Mardis E.R."/>
            <person name="Marra M.A."/>
            <person name="Miner T.L."/>
            <person name="Minx P."/>
            <person name="Mullikin J.C."/>
            <person name="Plumb R.W."/>
            <person name="Rogers J."/>
            <person name="Schein J.E."/>
            <person name="Sohrmann M."/>
            <person name="Spieth J."/>
            <person name="Stajich J.E."/>
            <person name="Wei C."/>
            <person name="Willey D."/>
            <person name="Wilson R.K."/>
            <person name="Durbin R.M."/>
            <person name="Waterston R.H."/>
        </authorList>
    </citation>
    <scope>NUCLEOTIDE SEQUENCE [LARGE SCALE GENOMIC DNA]</scope>
    <source>
        <strain>AF16</strain>
    </source>
</reference>
<reference evidence="5 6" key="2">
    <citation type="journal article" date="1999" name="Gene">
        <title>A highly conserved nematode protein folding operon in Caenorhabditis elegans and Caenorhabditis briggsae.</title>
        <authorList>
            <person name="Page A.P."/>
        </authorList>
    </citation>
    <scope>NUCLEOTIDE SEQUENCE [GENOMIC DNA] OF 1-249</scope>
    <scope>NUCLEOTIDE SEQUENCE [MRNA] OF 1-141</scope>
</reference>
<proteinExistence type="evidence at transcript level"/>